<proteinExistence type="evidence at protein level"/>
<protein>
    <recommendedName>
        <fullName>Hexose oxidase</fullName>
        <shortName>HOx</shortName>
        <ecNumber evidence="8">1.1.3.5</ecNumber>
    </recommendedName>
    <component>
        <recommendedName>
            <fullName>Hexose oxidase, 40 kDa form</fullName>
        </recommendedName>
    </component>
    <component>
        <recommendedName>
            <fullName>Hexose oxidase, 29 kDa form</fullName>
        </recommendedName>
    </component>
</protein>
<comment type="function">
    <text evidence="6 8">Catalyzes the selective oxidation of C1 hydroxyl moieties on mono- and disaccharides with concomitant reduction of molecular oxygen to hydrogen peroxide. This results in the formation of the corresponding lactones, which typically undergo spontaneous hydrolysis. Hexose oxidase is able to oxidize a variety of substrates including D-glucose, D-galactose, maltose, cellobiose, and lactose.</text>
</comment>
<comment type="catalytic activity">
    <reaction evidence="8">
        <text>beta-D-glucose + O2 = D-glucono-1,5-lactone + H2O2</text>
        <dbReference type="Rhea" id="RHEA:11428"/>
        <dbReference type="ChEBI" id="CHEBI:15379"/>
        <dbReference type="ChEBI" id="CHEBI:15903"/>
        <dbReference type="ChEBI" id="CHEBI:16217"/>
        <dbReference type="ChEBI" id="CHEBI:16240"/>
        <dbReference type="EC" id="1.1.3.5"/>
    </reaction>
</comment>
<comment type="catalytic activity">
    <reaction evidence="8">
        <text>D-galactose + O2 = D-galactono-1,5-lactone + H2O2</text>
        <dbReference type="Rhea" id="RHEA:59312"/>
        <dbReference type="ChEBI" id="CHEBI:4139"/>
        <dbReference type="ChEBI" id="CHEBI:15379"/>
        <dbReference type="ChEBI" id="CHEBI:15945"/>
        <dbReference type="ChEBI" id="CHEBI:16240"/>
        <dbReference type="EC" id="1.1.3.5"/>
    </reaction>
</comment>
<comment type="catalytic activity">
    <reaction evidence="8">
        <text>D-maltose + O2 = D-maltobiono-1,5-lactone + H2O2</text>
        <dbReference type="Rhea" id="RHEA:59344"/>
        <dbReference type="ChEBI" id="CHEBI:15379"/>
        <dbReference type="ChEBI" id="CHEBI:16240"/>
        <dbReference type="ChEBI" id="CHEBI:17306"/>
        <dbReference type="ChEBI" id="CHEBI:143029"/>
        <dbReference type="EC" id="1.1.3.5"/>
    </reaction>
</comment>
<comment type="catalytic activity">
    <reaction evidence="8">
        <text>D-cellobiose + O2 = D-cellobiono-1,5-lactone + H2O2</text>
        <dbReference type="Rhea" id="RHEA:59316"/>
        <dbReference type="ChEBI" id="CHEBI:15379"/>
        <dbReference type="ChEBI" id="CHEBI:16240"/>
        <dbReference type="ChEBI" id="CHEBI:17057"/>
        <dbReference type="ChEBI" id="CHEBI:17863"/>
        <dbReference type="EC" id="1.1.3.5"/>
    </reaction>
</comment>
<comment type="catalytic activity">
    <reaction evidence="8">
        <text>beta-lactose + O2 = lactobiono-1,5-lactone + H2O2</text>
        <dbReference type="Rhea" id="RHEA:59352"/>
        <dbReference type="ChEBI" id="CHEBI:15379"/>
        <dbReference type="ChEBI" id="CHEBI:16240"/>
        <dbReference type="ChEBI" id="CHEBI:36218"/>
        <dbReference type="ChEBI" id="CHEBI:143068"/>
        <dbReference type="EC" id="1.1.3.5"/>
    </reaction>
</comment>
<comment type="cofactor">
    <cofactor evidence="5 6">
        <name>FAD</name>
        <dbReference type="ChEBI" id="CHEBI:57692"/>
    </cofactor>
    <text evidence="6">Binds 1 FAD per subunit in a bicovalent manner.</text>
</comment>
<comment type="biophysicochemical properties">
    <kinetics>
        <KM evidence="7">0.3 mM for oxygen (at pH 5.8 and 25 degrees Celsius)</KM>
        <KM evidence="8">2.7 mM for D-glucose (at pH 6.3 and 25 degrees Celsius)</KM>
        <KM evidence="8">3.8 mM for D-galactose (at pH 6.3 and 25 degrees Celsius)</KM>
        <KM evidence="7">8.5 mM for glucose (at pH 5.8 and 25 degrees Celsius)</KM>
        <KM evidence="7">1.7 mM for lactose (at pH 5.8 and 25 degrees Celsius)</KM>
        <KM evidence="7">20 mM for galactose (at pH 5.8 and 25 degrees Celsius)</KM>
        <KM evidence="7">12.5 mM for cellobiose (at pH 5.8 and 25 degrees Celsius)</KM>
        <KM evidence="7">28 mM for maltose (at pH 5.8 and 25 degrees Celsius)</KM>
        <KM evidence="4">2.5 mM for glucose (at pH 6 and 26 degrees Celsius)</KM>
        <KM evidence="4">97 mM for lactose (at pH 6 and 26 degrees Celsius)</KM>
        <KM evidence="4">3.2 mM for galactose (at pH 6 and 26 degrees Celsius)</KM>
        <KM evidence="4">27 mM for cellobiose (at pH 6 and 26 degrees Celsius)</KM>
        <KM evidence="4">50 mM for maltose (at pH 6 and 26 degrees Celsius)</KM>
    </kinetics>
    <phDependence>
        <text evidence="4 7">Optimum pH is 6 (PubMed:11427234, PubMed:9108257). A second pH optimum was found at pH 10 (PubMed:11427234, PubMed:9108257).</text>
    </phDependence>
</comment>
<comment type="subunit">
    <text evidence="14">Homodimer.</text>
</comment>
<comment type="PTM">
    <text evidence="5 8">Cleaved into 40 kDa and 29 kDa cleavage products, but the 2 polypeptide chains do not separate and seem to be physically linked together.</text>
</comment>
<comment type="PTM">
    <text evidence="1">The FAD cofactor is bound via a bicovalent 6-S-cysteinyl, 8alpha-N1-histidyl FAD linkage.</text>
</comment>
<comment type="similarity">
    <text evidence="9">Belongs to the oxygen-dependent FAD-linked oxidoreductase family.</text>
</comment>
<comment type="caution">
    <text evidence="12 13">Was initially reported to use Cu(2+) as a cofactor (PubMed:4708670). However, cofactor composition could not be confirmed later (PubMed:9108257), and the discrepancies in the reported characteristics of the enzyme were suggested to originate from the characterization of a contaminating protein in PubMed:4708670.</text>
</comment>
<reference key="1">
    <citation type="journal article" date="1997" name="J. Biol. Chem.">
        <title>Hexose oxidase from the red alga Chondrus crispus. Purification, molecular cloning, and expression in Pichia pastoris.</title>
        <authorList>
            <person name="Hansen O.C."/>
            <person name="Stougaard P."/>
        </authorList>
    </citation>
    <scope>NUCLEOTIDE SEQUENCE [MRNA]</scope>
    <scope>PROTEIN SEQUENCE OF 8-22; 92-114; 189-202; 215-234; 338-342; 388-397; 434-444 AND 452-468</scope>
    <scope>FUNCTION</scope>
    <scope>CATALYTIC ACTIVITY</scope>
    <scope>COFACTOR</scope>
    <scope>BIOPHYSICOCHEMICAL PROPERTIES</scope>
    <scope>SUBUNIT</scope>
    <scope>PROTEOLYTIC PROCESSING</scope>
</reference>
<reference key="2">
    <citation type="journal article" date="2013" name="Proc. Natl. Acad. Sci. U.S.A.">
        <title>Genome structure and metabolic features in the red seaweed Chondrus crispus shed light on evolution of the Archaeplastida.</title>
        <authorList>
            <person name="Collen J."/>
            <person name="Porcel B."/>
            <person name="Carre W."/>
            <person name="Ball S.G."/>
            <person name="Chaparro C."/>
            <person name="Tonon T."/>
            <person name="Barbeyron T."/>
            <person name="Michel G."/>
            <person name="Noel B."/>
            <person name="Valentin K."/>
            <person name="Elias M."/>
            <person name="Artiguenave F."/>
            <person name="Arun A."/>
            <person name="Aury J.M."/>
            <person name="Barbosa-Neto J.F."/>
            <person name="Bothwell J.H."/>
            <person name="Bouget F.Y."/>
            <person name="Brillet L."/>
            <person name="Cabello-Hurtado F."/>
            <person name="Capella-Gutierrez S."/>
            <person name="Charrier B."/>
            <person name="Cladiere L."/>
            <person name="Cock J.M."/>
            <person name="Coelho S.M."/>
            <person name="Colleoni C."/>
            <person name="Czjzek M."/>
            <person name="Da Silva C."/>
            <person name="Delage L."/>
            <person name="Denoeud F."/>
            <person name="Deschamps P."/>
            <person name="Dittami S.M."/>
            <person name="Gabaldon T."/>
            <person name="Gachon C.M."/>
            <person name="Groisillier A."/>
            <person name="Herve C."/>
            <person name="Jabbari K."/>
            <person name="Katinka M."/>
            <person name="Kloareg B."/>
            <person name="Kowalczyk N."/>
            <person name="Labadie K."/>
            <person name="Leblanc C."/>
            <person name="Lopez P.J."/>
            <person name="McLachlan D.H."/>
            <person name="Meslet-Cladiere L."/>
            <person name="Moustafa A."/>
            <person name="Nehr Z."/>
            <person name="Nyvall Collen P."/>
            <person name="Panaud O."/>
            <person name="Partensky F."/>
            <person name="Poulain J."/>
            <person name="Rensing S.A."/>
            <person name="Rousvoal S."/>
            <person name="Samson G."/>
            <person name="Symeonidi A."/>
            <person name="Weissenbach J."/>
            <person name="Zambounis A."/>
            <person name="Wincker P."/>
            <person name="Boyen C."/>
        </authorList>
    </citation>
    <scope>NUCLEOTIDE SEQUENCE [LARGE SCALE GENOMIC DNA]</scope>
    <source>
        <strain>Stackhouse</strain>
    </source>
</reference>
<reference key="3">
    <citation type="journal article" date="2001" name="Enzyme Microb. Technol.">
        <title>Hexose oxidase from Chondrus crispus: improved purification using perfusion chromatography.</title>
        <authorList>
            <person name="Savary B.J."/>
            <person name="Hicks K.B."/>
            <person name="O'Connor J.V."/>
        </authorList>
    </citation>
    <scope>PROTEIN SEQUENCE OF 4-13 AND 338-349</scope>
    <scope>BIOPHYSICOCHEMICAL PROPERTIES</scope>
    <scope>GLYCOSYLATION</scope>
</reference>
<reference key="4">
    <citation type="journal article" date="2006" name="FEBS J.">
        <title>Characterization of the flavin association in hexose oxidase from Chondrus crispus.</title>
        <authorList>
            <person name="Rand T."/>
            <person name="Qvist K.B."/>
            <person name="Walter C.P."/>
            <person name="Poulsen C.H."/>
        </authorList>
    </citation>
    <scope>PROTEIN SEQUENCE OF 74-91 AND 132-157</scope>
    <scope>FUNCTION</scope>
    <scope>COFACTOR</scope>
    <scope>FAD-BINDING</scope>
    <scope>MUTAGENESIS OF HIS-79</scope>
</reference>
<reference key="5">
    <citation type="journal article" date="1973" name="Biochim. Biophys. Acta">
        <title>Purification and characterization of hexose oxidase from the red alga Chondrus crispus.</title>
        <authorList>
            <person name="Sullivan J.D. Jr."/>
            <person name="Ikawa M."/>
        </authorList>
    </citation>
    <scope>IDENTIFICATION</scope>
</reference>
<reference key="6">
    <citation type="journal article" date="1997" name="Eur. J. Biochem.">
        <title>Characterization of hexose oxidase from the red seaweed Chondrus crispus.</title>
        <authorList>
            <person name="Groen B.W."/>
            <person name="De Vries S."/>
            <person name="Duine J.A."/>
        </authorList>
    </citation>
    <scope>FUNCTION</scope>
    <scope>CATALYTIC ACTIVITY</scope>
    <scope>BIOPHYSICOCHEMICAL PROPERTIES</scope>
    <scope>GLYCOSYLATION</scope>
</reference>
<reference key="7">
    <citation type="journal article" date="2001" name="Protein Expr. Purif.">
        <title>Optimization of the production of Chondrus crispus hexose oxidase in Pichia pastoris.</title>
        <authorList>
            <person name="Wolff A.M."/>
            <person name="Hansen O.C."/>
            <person name="Poulsen U."/>
            <person name="Madrid S."/>
            <person name="Stougaard P."/>
        </authorList>
    </citation>
    <scope>COFACTOR</scope>
    <scope>POST-TRANSLATIONAL MODIFICATION</scope>
</reference>
<reference key="8">
    <citation type="journal article" date="2014" name="PLoS ONE">
        <title>Finding sequences for over 270 orphan enzymes.</title>
        <authorList>
            <person name="Shearer A.G."/>
            <person name="Altman T."/>
            <person name="Rhee C.D."/>
        </authorList>
    </citation>
    <scope>IDENTIFICATION</scope>
</reference>
<gene>
    <name type="primary">HOX</name>
    <name type="ORF">CHC_T00009130001</name>
</gene>
<accession>P93762</accession>
<accession>S0F2V9</accession>
<sequence length="546" mass="61789">MATLPQKDPGYIVIDVNAGTPDKPDPRLPSMKQGFNRRWIGTNIDFVYVVYTPQGACTALDRAMEKCSPGTVRIVSGGHCYEDFVFDECVKAIINVTGLVESGYDDDRGYFVSSGDTNWGSFKTLFRDHGRVLPGGSCYSVGLGGHIVGGGDGILARLHGLPVDWLSGVEVVVKPVLTEDSVLKYVHKDSEGDDGDLFWAHTGGGGGNFGIITKYYFKDLPMSPRGVIASNLHFSWDGFTRDALQDLLTKYFKLARCDWKNTVGKFQIFHQAAEEFVMYLYTSYSNDAEREVAQDRHYHLEADIEQIYKTCEPTKALGGHAGWAPFPVRPRKRHTSKTSYIHDETMDYPFYALTETINGSGPNQRGKYKSAYMIKDFPDLQIDVIWKYLTEVPDGLTSAEMKDALLQVDMFGGEIHNVAWDATAVAQRKYIIKLQYQTYWQEEDKDAVNLKWIRDFYEEMYEPYGGVPDPNTQVESGKGVFEGCYFNYPDVDLNNWKNGKYGALELYFLGNLNRLIKAKKLWDPNEIFTNKQSIPTKSLKEYKQTK</sequence>
<evidence type="ECO:0000250" key="1">
    <source>
        <dbReference type="UniProtKB" id="Q6PW77"/>
    </source>
</evidence>
<evidence type="ECO:0000255" key="2">
    <source>
        <dbReference type="PROSITE-ProRule" id="PRU00498"/>
    </source>
</evidence>
<evidence type="ECO:0000255" key="3">
    <source>
        <dbReference type="PROSITE-ProRule" id="PRU00718"/>
    </source>
</evidence>
<evidence type="ECO:0000269" key="4">
    <source>
    </source>
</evidence>
<evidence type="ECO:0000269" key="5">
    <source>
    </source>
</evidence>
<evidence type="ECO:0000269" key="6">
    <source>
    </source>
</evidence>
<evidence type="ECO:0000269" key="7">
    <source>
    </source>
</evidence>
<evidence type="ECO:0000269" key="8">
    <source>
    </source>
</evidence>
<evidence type="ECO:0000305" key="9"/>
<evidence type="ECO:0000305" key="10">
    <source>
    </source>
</evidence>
<evidence type="ECO:0000305" key="11">
    <source>
    </source>
</evidence>
<evidence type="ECO:0000305" key="12">
    <source>
    </source>
</evidence>
<evidence type="ECO:0000305" key="13">
    <source>
    </source>
</evidence>
<evidence type="ECO:0000305" key="14">
    <source>
    </source>
</evidence>
<keyword id="KW-0903">Direct protein sequencing</keyword>
<keyword id="KW-0274">FAD</keyword>
<keyword id="KW-0285">Flavoprotein</keyword>
<keyword id="KW-0325">Glycoprotein</keyword>
<keyword id="KW-0560">Oxidoreductase</keyword>
<keyword id="KW-1185">Reference proteome</keyword>
<feature type="chain" id="PRO_0000430460" description="Hexose oxidase">
    <location>
        <begin position="1"/>
        <end position="546"/>
    </location>
</feature>
<feature type="chain" id="PRO_0000430461" description="Hexose oxidase, 40 kDa form" evidence="10">
    <location>
        <begin position="4"/>
        <end position="337"/>
    </location>
</feature>
<feature type="chain" id="PRO_0000430462" description="Hexose oxidase, 29 kDa form" evidence="10 14">
    <location>
        <begin position="338"/>
        <end position="546"/>
    </location>
</feature>
<feature type="domain" description="FAD-binding PCMH-type" evidence="3">
    <location>
        <begin position="40"/>
        <end position="222"/>
    </location>
</feature>
<feature type="glycosylation site" description="N-linked (GlcNAc...) asparagine" evidence="2">
    <location>
        <position position="95"/>
    </location>
</feature>
<feature type="glycosylation site" description="N-linked (GlcNAc...) asparagine" evidence="2">
    <location>
        <position position="358"/>
    </location>
</feature>
<feature type="cross-link" description="6-(S-cysteinyl)-8alpha-(pros-histidyl)-FAD (His-Cys)" evidence="11">
    <location>
        <begin position="79"/>
        <end position="138"/>
    </location>
</feature>
<feature type="mutagenesis site" description="Loss of activity due to the absence of FAD cofactor." evidence="6">
    <original>H</original>
    <variation>K</variation>
    <location>
        <position position="79"/>
    </location>
</feature>
<feature type="sequence conflict" description="In Ref. 3; AA sequence." evidence="9" ref="3">
    <original>L</original>
    <variation>K</variation>
    <location>
        <position position="4"/>
    </location>
</feature>
<feature type="sequence conflict" description="In Ref. 3; AA sequence." evidence="9" ref="3">
    <original>IV</original>
    <variation>AI</variation>
    <location>
        <begin position="12"/>
        <end position="13"/>
    </location>
</feature>
<feature type="sequence conflict" description="In Ref. 1; AAB49376/AA sequence." evidence="9" ref="1">
    <original>D</original>
    <variation>N</variation>
    <location>
        <position position="193"/>
    </location>
</feature>
<feature type="sequence conflict" description="In Ref. 1; AAB49376/AA sequence." evidence="9" ref="1">
    <original>D</original>
    <variation>E</variation>
    <location>
        <position position="196"/>
    </location>
</feature>
<feature type="sequence conflict" description="In Ref. 3; AA sequence." evidence="9" ref="3">
    <location>
        <begin position="339"/>
        <end position="340"/>
    </location>
</feature>
<feature type="sequence conflict" description="In Ref. 1; AAB49376/AA sequence and 3; AA sequence." evidence="9" ref="1 3">
    <original>I</original>
    <variation>M</variation>
    <location>
        <position position="341"/>
    </location>
</feature>
<feature type="sequence conflict" description="In Ref. 3; AA sequence." evidence="9" ref="3">
    <original>T</original>
    <variation>R</variation>
    <location>
        <position position="345"/>
    </location>
</feature>
<feature type="sequence conflict" description="In Ref. 1; AAB49376." evidence="9" ref="1">
    <original>L</original>
    <variation>F</variation>
    <location>
        <position position="380"/>
    </location>
</feature>
<feature type="sequence conflict" description="In Ref. 1; AAB49376." evidence="9" ref="1">
    <original>N</original>
    <variation>K</variation>
    <location>
        <position position="417"/>
    </location>
</feature>
<feature type="sequence conflict" description="In Ref. 1; AAB49376." evidence="9" ref="1">
    <original>A</original>
    <variation>V</variation>
    <location>
        <position position="419"/>
    </location>
</feature>
<feature type="sequence conflict" description="In Ref. 1; AAB49376." evidence="9" ref="1">
    <original>K</original>
    <variation>E</variation>
    <location>
        <position position="429"/>
    </location>
</feature>
<feature type="sequence conflict" description="In Ref. 1; AAB49376." evidence="9" ref="1">
    <original>K</original>
    <variation>W</variation>
    <location>
        <position position="520"/>
    </location>
</feature>
<feature type="sequence conflict" description="In Ref. 1; AAB49376." evidence="9" ref="1">
    <original>S</original>
    <variation>P</variation>
    <location>
        <position position="538"/>
    </location>
</feature>
<feature type="sequence conflict" description="In Ref. 1; AAB49376." evidence="9" ref="1">
    <original>Y</original>
    <variation>P</variation>
    <location>
        <position position="542"/>
    </location>
</feature>
<name>HOX_CHOCR</name>
<organism>
    <name type="scientific">Chondrus crispus</name>
    <name type="common">Carrageen Irish moss</name>
    <name type="synonym">Polymorpha crispa</name>
    <dbReference type="NCBI Taxonomy" id="2769"/>
    <lineage>
        <taxon>Eukaryota</taxon>
        <taxon>Rhodophyta</taxon>
        <taxon>Florideophyceae</taxon>
        <taxon>Rhodymeniophycidae</taxon>
        <taxon>Gigartinales</taxon>
        <taxon>Gigartinaceae</taxon>
        <taxon>Chondrus</taxon>
    </lineage>
</organism>
<dbReference type="EC" id="1.1.3.5" evidence="8"/>
<dbReference type="EMBL" id="U89770">
    <property type="protein sequence ID" value="AAB49376.1"/>
    <property type="molecule type" value="mRNA"/>
</dbReference>
<dbReference type="EMBL" id="HG001523">
    <property type="protein sequence ID" value="CDF77476.1"/>
    <property type="molecule type" value="Genomic_DNA"/>
</dbReference>
<dbReference type="RefSeq" id="XP_005712350.1">
    <property type="nucleotide sequence ID" value="XM_005712293.1"/>
</dbReference>
<dbReference type="SMR" id="P93762"/>
<dbReference type="STRING" id="2769.P93762"/>
<dbReference type="GlyCosmos" id="P93762">
    <property type="glycosylation" value="2 sites, No reported glycans"/>
</dbReference>
<dbReference type="EnsemblPlants" id="CDF77476">
    <property type="protein sequence ID" value="CDF77476"/>
    <property type="gene ID" value="CHC_T00009130001"/>
</dbReference>
<dbReference type="GeneID" id="17320065"/>
<dbReference type="Gramene" id="CDF77476">
    <property type="protein sequence ID" value="CDF77476"/>
    <property type="gene ID" value="CHC_T00009130001"/>
</dbReference>
<dbReference type="KEGG" id="ccp:CHC_T00009130001"/>
<dbReference type="OMA" id="KHVGWIR"/>
<dbReference type="OrthoDB" id="407275at2759"/>
<dbReference type="Proteomes" id="UP000012073">
    <property type="component" value="Unassembled WGS sequence"/>
</dbReference>
<dbReference type="GO" id="GO:0046562">
    <property type="term" value="F:beta-D-glucose oxidase activity"/>
    <property type="evidence" value="ECO:0007669"/>
    <property type="project" value="RHEA"/>
</dbReference>
<dbReference type="GO" id="GO:0005507">
    <property type="term" value="F:copper ion binding"/>
    <property type="evidence" value="ECO:0000314"/>
    <property type="project" value="UniProtKB"/>
</dbReference>
<dbReference type="GO" id="GO:0071949">
    <property type="term" value="F:FAD binding"/>
    <property type="evidence" value="ECO:0000314"/>
    <property type="project" value="UniProtKB"/>
</dbReference>
<dbReference type="GO" id="GO:0047979">
    <property type="term" value="F:hexose oxidase activity"/>
    <property type="evidence" value="ECO:0000314"/>
    <property type="project" value="UniProtKB"/>
</dbReference>
<dbReference type="GO" id="GO:0042803">
    <property type="term" value="F:protein homodimerization activity"/>
    <property type="evidence" value="ECO:0000314"/>
    <property type="project" value="UniProtKB"/>
</dbReference>
<dbReference type="FunFam" id="3.30.465.10:FF:000093">
    <property type="entry name" value="FAD-linked oxidoreductase afoF"/>
    <property type="match status" value="1"/>
</dbReference>
<dbReference type="Gene3D" id="3.30.465.10">
    <property type="match status" value="1"/>
</dbReference>
<dbReference type="Gene3D" id="3.40.462.20">
    <property type="match status" value="1"/>
</dbReference>
<dbReference type="InterPro" id="IPR012951">
    <property type="entry name" value="BBE"/>
</dbReference>
<dbReference type="InterPro" id="IPR016166">
    <property type="entry name" value="FAD-bd_PCMH"/>
</dbReference>
<dbReference type="InterPro" id="IPR036318">
    <property type="entry name" value="FAD-bd_PCMH-like_sf"/>
</dbReference>
<dbReference type="InterPro" id="IPR016169">
    <property type="entry name" value="FAD-bd_PCMH_sub2"/>
</dbReference>
<dbReference type="InterPro" id="IPR050416">
    <property type="entry name" value="FAD-linked_Oxidoreductase"/>
</dbReference>
<dbReference type="InterPro" id="IPR006094">
    <property type="entry name" value="Oxid_FAD_bind_N"/>
</dbReference>
<dbReference type="PANTHER" id="PTHR42973">
    <property type="entry name" value="BINDING OXIDOREDUCTASE, PUTATIVE (AFU_ORTHOLOGUE AFUA_1G17690)-RELATED"/>
    <property type="match status" value="1"/>
</dbReference>
<dbReference type="PANTHER" id="PTHR42973:SF39">
    <property type="entry name" value="FAD-BINDING PCMH-TYPE DOMAIN-CONTAINING PROTEIN"/>
    <property type="match status" value="1"/>
</dbReference>
<dbReference type="Pfam" id="PF08031">
    <property type="entry name" value="BBE"/>
    <property type="match status" value="1"/>
</dbReference>
<dbReference type="Pfam" id="PF01565">
    <property type="entry name" value="FAD_binding_4"/>
    <property type="match status" value="1"/>
</dbReference>
<dbReference type="SUPFAM" id="SSF56176">
    <property type="entry name" value="FAD-binding/transporter-associated domain-like"/>
    <property type="match status" value="1"/>
</dbReference>
<dbReference type="PROSITE" id="PS51387">
    <property type="entry name" value="FAD_PCMH"/>
    <property type="match status" value="1"/>
</dbReference>